<organism>
    <name type="scientific">Bacillus subtilis (strain 168)</name>
    <dbReference type="NCBI Taxonomy" id="224308"/>
    <lineage>
        <taxon>Bacteria</taxon>
        <taxon>Bacillati</taxon>
        <taxon>Bacillota</taxon>
        <taxon>Bacilli</taxon>
        <taxon>Bacillales</taxon>
        <taxon>Bacillaceae</taxon>
        <taxon>Bacillus</taxon>
    </lineage>
</organism>
<protein>
    <recommendedName>
        <fullName>General stress protein 16U</fullName>
        <shortName>GSP16U</shortName>
    </recommendedName>
</protein>
<name>G16U_BACSU</name>
<sequence>MTISLAKGQKVDLTKTNPGLSKVVVGLGWDTNKYDGGHDFDLDSSVFLLDAAGKCASPNDFIFYNQLEGGNGSVVHSGDNLTGAGEGDDENVKVNLSAVPANIDKISFVITIHDAEARSQNFGQVSNAFVRIVNEETNEELIRYDLAEDFSIETAIIAGELYRHNGEWKFSAIGSGYQGGLARIATDYGLQVG</sequence>
<comment type="induction">
    <text>By heat shock, salt stress, oxidative stress, glucose limitation and oxygen limitation.</text>
</comment>
<comment type="similarity">
    <text evidence="2">Belongs to the CAPAB/TerDEXZ family.</text>
</comment>
<accession>P80875</accession>
<dbReference type="EMBL" id="AB000617">
    <property type="protein sequence ID" value="BAA22251.1"/>
    <property type="molecule type" value="Genomic_DNA"/>
</dbReference>
<dbReference type="EMBL" id="AL009126">
    <property type="protein sequence ID" value="CAB12084.1"/>
    <property type="molecule type" value="Genomic_DNA"/>
</dbReference>
<dbReference type="PIR" id="F69756">
    <property type="entry name" value="F69756"/>
</dbReference>
<dbReference type="RefSeq" id="NP_388172.1">
    <property type="nucleotide sequence ID" value="NC_000964.3"/>
</dbReference>
<dbReference type="RefSeq" id="WP_003234723.1">
    <property type="nucleotide sequence ID" value="NZ_OZ025638.1"/>
</dbReference>
<dbReference type="SMR" id="P80875"/>
<dbReference type="FunCoup" id="P80875">
    <property type="interactions" value="14"/>
</dbReference>
<dbReference type="IntAct" id="P80875">
    <property type="interactions" value="1"/>
</dbReference>
<dbReference type="MINT" id="P80875"/>
<dbReference type="STRING" id="224308.BSU02900"/>
<dbReference type="jPOST" id="P80875"/>
<dbReference type="PaxDb" id="224308-BSU02900"/>
<dbReference type="DNASU" id="938364"/>
<dbReference type="EnsemblBacteria" id="CAB12084">
    <property type="protein sequence ID" value="CAB12084"/>
    <property type="gene ID" value="BSU_02900"/>
</dbReference>
<dbReference type="GeneID" id="938364"/>
<dbReference type="KEGG" id="bsu:BSU02900"/>
<dbReference type="PATRIC" id="fig|224308.179.peg.302"/>
<dbReference type="eggNOG" id="COG2310">
    <property type="taxonomic scope" value="Bacteria"/>
</dbReference>
<dbReference type="InParanoid" id="P80875"/>
<dbReference type="OrthoDB" id="4123258at2"/>
<dbReference type="PhylomeDB" id="P80875"/>
<dbReference type="BioCyc" id="BSUB:BSU02900-MONOMER"/>
<dbReference type="Proteomes" id="UP000001570">
    <property type="component" value="Chromosome"/>
</dbReference>
<dbReference type="CDD" id="cd06974">
    <property type="entry name" value="TerD_like"/>
    <property type="match status" value="1"/>
</dbReference>
<dbReference type="FunFam" id="2.60.60.30:FF:000001">
    <property type="entry name" value="Tellurium resistance protein TerD"/>
    <property type="match status" value="1"/>
</dbReference>
<dbReference type="Gene3D" id="2.60.60.30">
    <property type="entry name" value="sav2460 like domains"/>
    <property type="match status" value="1"/>
</dbReference>
<dbReference type="InterPro" id="IPR051324">
    <property type="entry name" value="Stress/Tellurium_Resist"/>
</dbReference>
<dbReference type="InterPro" id="IPR003325">
    <property type="entry name" value="TerD"/>
</dbReference>
<dbReference type="PANTHER" id="PTHR32097">
    <property type="entry name" value="CAMP-BINDING PROTEIN 1-RELATED"/>
    <property type="match status" value="1"/>
</dbReference>
<dbReference type="PANTHER" id="PTHR32097:SF4">
    <property type="entry name" value="GENERAL STRESS PROTEIN 16U"/>
    <property type="match status" value="1"/>
</dbReference>
<dbReference type="Pfam" id="PF02342">
    <property type="entry name" value="TerD"/>
    <property type="match status" value="1"/>
</dbReference>
<feature type="initiator methionine" description="Removed" evidence="1">
    <location>
        <position position="1"/>
    </location>
</feature>
<feature type="chain" id="PRO_0000170783" description="General stress protein 16U">
    <location>
        <begin position="2"/>
        <end position="193"/>
    </location>
</feature>
<reference key="1">
    <citation type="journal article" date="1997" name="Microbiology">
        <title>A 32 kb nucleotide sequence from the region of the lincomycin-resistance gene (22 degrees-25 degrees) of the Bacillus subtilis chromosome and identification of the site of the lin-2 mutation.</title>
        <authorList>
            <person name="Kumano M."/>
            <person name="Tamakoshi A."/>
            <person name="Yamane K."/>
        </authorList>
    </citation>
    <scope>NUCLEOTIDE SEQUENCE [GENOMIC DNA]</scope>
    <source>
        <strain>168</strain>
    </source>
</reference>
<reference key="2">
    <citation type="journal article" date="1997" name="Nature">
        <title>The complete genome sequence of the Gram-positive bacterium Bacillus subtilis.</title>
        <authorList>
            <person name="Kunst F."/>
            <person name="Ogasawara N."/>
            <person name="Moszer I."/>
            <person name="Albertini A.M."/>
            <person name="Alloni G."/>
            <person name="Azevedo V."/>
            <person name="Bertero M.G."/>
            <person name="Bessieres P."/>
            <person name="Bolotin A."/>
            <person name="Borchert S."/>
            <person name="Borriss R."/>
            <person name="Boursier L."/>
            <person name="Brans A."/>
            <person name="Braun M."/>
            <person name="Brignell S.C."/>
            <person name="Bron S."/>
            <person name="Brouillet S."/>
            <person name="Bruschi C.V."/>
            <person name="Caldwell B."/>
            <person name="Capuano V."/>
            <person name="Carter N.M."/>
            <person name="Choi S.-K."/>
            <person name="Codani J.-J."/>
            <person name="Connerton I.F."/>
            <person name="Cummings N.J."/>
            <person name="Daniel R.A."/>
            <person name="Denizot F."/>
            <person name="Devine K.M."/>
            <person name="Duesterhoeft A."/>
            <person name="Ehrlich S.D."/>
            <person name="Emmerson P.T."/>
            <person name="Entian K.-D."/>
            <person name="Errington J."/>
            <person name="Fabret C."/>
            <person name="Ferrari E."/>
            <person name="Foulger D."/>
            <person name="Fritz C."/>
            <person name="Fujita M."/>
            <person name="Fujita Y."/>
            <person name="Fuma S."/>
            <person name="Galizzi A."/>
            <person name="Galleron N."/>
            <person name="Ghim S.-Y."/>
            <person name="Glaser P."/>
            <person name="Goffeau A."/>
            <person name="Golightly E.J."/>
            <person name="Grandi G."/>
            <person name="Guiseppi G."/>
            <person name="Guy B.J."/>
            <person name="Haga K."/>
            <person name="Haiech J."/>
            <person name="Harwood C.R."/>
            <person name="Henaut A."/>
            <person name="Hilbert H."/>
            <person name="Holsappel S."/>
            <person name="Hosono S."/>
            <person name="Hullo M.-F."/>
            <person name="Itaya M."/>
            <person name="Jones L.-M."/>
            <person name="Joris B."/>
            <person name="Karamata D."/>
            <person name="Kasahara Y."/>
            <person name="Klaerr-Blanchard M."/>
            <person name="Klein C."/>
            <person name="Kobayashi Y."/>
            <person name="Koetter P."/>
            <person name="Koningstein G."/>
            <person name="Krogh S."/>
            <person name="Kumano M."/>
            <person name="Kurita K."/>
            <person name="Lapidus A."/>
            <person name="Lardinois S."/>
            <person name="Lauber J."/>
            <person name="Lazarevic V."/>
            <person name="Lee S.-M."/>
            <person name="Levine A."/>
            <person name="Liu H."/>
            <person name="Masuda S."/>
            <person name="Mauel C."/>
            <person name="Medigue C."/>
            <person name="Medina N."/>
            <person name="Mellado R.P."/>
            <person name="Mizuno M."/>
            <person name="Moestl D."/>
            <person name="Nakai S."/>
            <person name="Noback M."/>
            <person name="Noone D."/>
            <person name="O'Reilly M."/>
            <person name="Ogawa K."/>
            <person name="Ogiwara A."/>
            <person name="Oudega B."/>
            <person name="Park S.-H."/>
            <person name="Parro V."/>
            <person name="Pohl T.M."/>
            <person name="Portetelle D."/>
            <person name="Porwollik S."/>
            <person name="Prescott A.M."/>
            <person name="Presecan E."/>
            <person name="Pujic P."/>
            <person name="Purnelle B."/>
            <person name="Rapoport G."/>
            <person name="Rey M."/>
            <person name="Reynolds S."/>
            <person name="Rieger M."/>
            <person name="Rivolta C."/>
            <person name="Rocha E."/>
            <person name="Roche B."/>
            <person name="Rose M."/>
            <person name="Sadaie Y."/>
            <person name="Sato T."/>
            <person name="Scanlan E."/>
            <person name="Schleich S."/>
            <person name="Schroeter R."/>
            <person name="Scoffone F."/>
            <person name="Sekiguchi J."/>
            <person name="Sekowska A."/>
            <person name="Seror S.J."/>
            <person name="Serror P."/>
            <person name="Shin B.-S."/>
            <person name="Soldo B."/>
            <person name="Sorokin A."/>
            <person name="Tacconi E."/>
            <person name="Takagi T."/>
            <person name="Takahashi H."/>
            <person name="Takemaru K."/>
            <person name="Takeuchi M."/>
            <person name="Tamakoshi A."/>
            <person name="Tanaka T."/>
            <person name="Terpstra P."/>
            <person name="Tognoni A."/>
            <person name="Tosato V."/>
            <person name="Uchiyama S."/>
            <person name="Vandenbol M."/>
            <person name="Vannier F."/>
            <person name="Vassarotti A."/>
            <person name="Viari A."/>
            <person name="Wambutt R."/>
            <person name="Wedler E."/>
            <person name="Wedler H."/>
            <person name="Weitzenegger T."/>
            <person name="Winters P."/>
            <person name="Wipat A."/>
            <person name="Yamamoto H."/>
            <person name="Yamane K."/>
            <person name="Yasumoto K."/>
            <person name="Yata K."/>
            <person name="Yoshida K."/>
            <person name="Yoshikawa H.-F."/>
            <person name="Zumstein E."/>
            <person name="Yoshikawa H."/>
            <person name="Danchin A."/>
        </authorList>
    </citation>
    <scope>NUCLEOTIDE SEQUENCE [LARGE SCALE GENOMIC DNA]</scope>
    <source>
        <strain>168</strain>
    </source>
</reference>
<reference key="3">
    <citation type="journal article" date="1997" name="Electrophoresis">
        <title>First steps from a two-dimensional protein index towards a response-regulation map for Bacillus subtilis.</title>
        <authorList>
            <person name="Antelmann H."/>
            <person name="Bernhardt J."/>
            <person name="Schmid R."/>
            <person name="Mach H."/>
            <person name="Voelker U."/>
            <person name="Hecker M."/>
        </authorList>
    </citation>
    <scope>PROTEIN SEQUENCE OF 2-32</scope>
    <source>
        <strain>168 / IS58</strain>
    </source>
</reference>
<proteinExistence type="evidence at protein level"/>
<keyword id="KW-0903">Direct protein sequencing</keyword>
<keyword id="KW-1185">Reference proteome</keyword>
<keyword id="KW-0346">Stress response</keyword>
<gene>
    <name type="primary">yceD</name>
    <name type="ordered locus">BSU02900</name>
</gene>
<evidence type="ECO:0000269" key="1">
    <source>
    </source>
</evidence>
<evidence type="ECO:0000305" key="2"/>